<reference key="1">
    <citation type="journal article" date="1998" name="Science">
        <title>Genome sequence of the nematode C. elegans: a platform for investigating biology.</title>
        <authorList>
            <consortium name="The C. elegans sequencing consortium"/>
        </authorList>
    </citation>
    <scope>NUCLEOTIDE SEQUENCE [LARGE SCALE GENOMIC DNA]</scope>
    <source>
        <strain>Bristol N2</strain>
    </source>
</reference>
<reference key="2">
    <citation type="journal article" date="2012" name="EMBO J.">
        <title>Monoamines and neuropeptides interact to inhibit aversive behaviour in Caenorhabditis elegans.</title>
        <authorList>
            <person name="Mills H."/>
            <person name="Wragg R."/>
            <person name="Hapiak V."/>
            <person name="Castelletto M."/>
            <person name="Zahratka J."/>
            <person name="Harris G."/>
            <person name="Summers P."/>
            <person name="Korchnak A."/>
            <person name="Law W."/>
            <person name="Bamber B."/>
            <person name="Komuniecki R."/>
        </authorList>
    </citation>
    <scope>FUNCTION</scope>
    <scope>TISSUE SPECIFICITY</scope>
    <scope>DISRUPTION PHENOTYPE</scope>
</reference>
<reference evidence="6" key="3">
    <citation type="journal article" date="2023" name="Biochem. Biophys. Res. Commun.">
        <title>The G protein-coupled receptor neuropeptide receptor-15 modulates larval development via the transforming growth factor-beta DAF-7 protein in Caenorhabditis elegans.</title>
        <authorList>
            <person name="Ono M."/>
            <person name="Matsushita K."/>
            <person name="Maega S."/>
            <person name="Asano N."/>
            <person name="Matsunaga Y."/>
            <person name="Bito T."/>
            <person name="Iwasaki T."/>
            <person name="Kawano T."/>
        </authorList>
    </citation>
    <scope>FUNCTION</scope>
    <scope>TISSUE SPECIFICITY</scope>
    <scope>DISRUPTION PHENOTYPE</scope>
</reference>
<reference evidence="6" key="4">
    <citation type="journal article" date="2024" name="Elife">
        <title>Neuronal NPR-15 modulates molecular and behavioral immune responses via the amphid sensory neuron-intestinal axis in C. elegans.</title>
        <authorList>
            <person name="Otarigho B."/>
            <person name="Butts A.F."/>
            <person name="Aballay A."/>
        </authorList>
    </citation>
    <scope>FUNCTION</scope>
    <scope>TISSUE SPECIFICITY</scope>
    <scope>DEVELOPMENTAL STAGE</scope>
    <scope>DISRUPTION PHENOTYPE</scope>
</reference>
<keyword id="KW-1003">Cell membrane</keyword>
<keyword id="KW-1015">Disulfide bond</keyword>
<keyword id="KW-0297">G-protein coupled receptor</keyword>
<keyword id="KW-0472">Membrane</keyword>
<keyword id="KW-0675">Receptor</keyword>
<keyword id="KW-1185">Reference proteome</keyword>
<keyword id="KW-0807">Transducer</keyword>
<keyword id="KW-0812">Transmembrane</keyword>
<keyword id="KW-1133">Transmembrane helix</keyword>
<evidence type="ECO:0000255" key="1"/>
<evidence type="ECO:0000255" key="2">
    <source>
        <dbReference type="PROSITE-ProRule" id="PRU00521"/>
    </source>
</evidence>
<evidence type="ECO:0000269" key="3">
    <source>
    </source>
</evidence>
<evidence type="ECO:0000269" key="4">
    <source>
    </source>
</evidence>
<evidence type="ECO:0000269" key="5">
    <source>
    </source>
</evidence>
<evidence type="ECO:0000305" key="6"/>
<sequence>MSVAVGIPYVCFFIILSVVGIIGNVIVIYAIAGDRNMRKSVMNILLLNLAVADLANLIFTIPEWIPPVFFGSTDWLFPSFLCPVCRYLECVFLFASISTQMIVCIERYIAIVLPMQARQLCSRRNVLITVLVDWIFVACFASPYAVWHSVKTKDRNTNSLRFKLFQLSATCSNTVGKSTWWQGYKLTEFLAFYFVPCFIITVVYTKVAKCLWCKDPTLQCETRSCLDNKSSSRSSDALRTRRNVVKMLIACVAVYFVCYSPIQVIFLSKAVLNVTIHPPYDFILLMNALAMTCSASNPLLYTLFSQKFRRRLRDVLYCPSDVENETKTYYSINNTSIVGPRASFN</sequence>
<name>NPR15_CAEEL</name>
<dbReference type="EMBL" id="Z48245">
    <property type="protein sequence ID" value="CAA88290.2"/>
    <property type="molecule type" value="Genomic_DNA"/>
</dbReference>
<dbReference type="PIR" id="T25354">
    <property type="entry name" value="T25354"/>
</dbReference>
<dbReference type="RefSeq" id="NP_497744.2">
    <property type="nucleotide sequence ID" value="NM_065343.3"/>
</dbReference>
<dbReference type="SMR" id="Q09638"/>
<dbReference type="BioGRID" id="40710">
    <property type="interactions" value="2"/>
</dbReference>
<dbReference type="STRING" id="6239.T27D1.3.1"/>
<dbReference type="PaxDb" id="6239-T27D1.3"/>
<dbReference type="EnsemblMetazoa" id="T27D1.3.1">
    <property type="protein sequence ID" value="T27D1.3.1"/>
    <property type="gene ID" value="WBGene00012084"/>
</dbReference>
<dbReference type="EnsemblMetazoa" id="T27D1.3.2">
    <property type="protein sequence ID" value="T27D1.3.2"/>
    <property type="gene ID" value="WBGene00012084"/>
</dbReference>
<dbReference type="UCSC" id="T27D1.3">
    <property type="organism name" value="c. elegans"/>
</dbReference>
<dbReference type="AGR" id="WB:WBGene00012084"/>
<dbReference type="WormBase" id="T27D1.3">
    <property type="protein sequence ID" value="CE54353"/>
    <property type="gene ID" value="WBGene00012084"/>
    <property type="gene designation" value="npr-15"/>
</dbReference>
<dbReference type="eggNOG" id="ENOG502S3T9">
    <property type="taxonomic scope" value="Eukaryota"/>
</dbReference>
<dbReference type="GeneTree" id="ENSGT01130000278308"/>
<dbReference type="HOGENOM" id="CLU_009579_6_4_1"/>
<dbReference type="InParanoid" id="Q09638"/>
<dbReference type="OMA" id="IVCIERY"/>
<dbReference type="PhylomeDB" id="Q09638"/>
<dbReference type="PRO" id="PR:Q09638"/>
<dbReference type="Proteomes" id="UP000001940">
    <property type="component" value="Chromosome III"/>
</dbReference>
<dbReference type="Bgee" id="WBGene00012084">
    <property type="expression patterns" value="Expressed in larva and 2 other cell types or tissues"/>
</dbReference>
<dbReference type="GO" id="GO:0005886">
    <property type="term" value="C:plasma membrane"/>
    <property type="evidence" value="ECO:0007669"/>
    <property type="project" value="UniProtKB-SubCell"/>
</dbReference>
<dbReference type="GO" id="GO:0004930">
    <property type="term" value="F:G protein-coupled receptor activity"/>
    <property type="evidence" value="ECO:0007669"/>
    <property type="project" value="UniProtKB-KW"/>
</dbReference>
<dbReference type="GO" id="GO:0007186">
    <property type="term" value="P:G protein-coupled receptor signaling pathway"/>
    <property type="evidence" value="ECO:0000318"/>
    <property type="project" value="GO_Central"/>
</dbReference>
<dbReference type="CDD" id="cd00637">
    <property type="entry name" value="7tm_classA_rhodopsin-like"/>
    <property type="match status" value="1"/>
</dbReference>
<dbReference type="FunFam" id="1.20.1070.10:FF:000370">
    <property type="entry name" value="Neuropeptide receptor 15"/>
    <property type="match status" value="1"/>
</dbReference>
<dbReference type="Gene3D" id="1.20.1070.10">
    <property type="entry name" value="Rhodopsin 7-helix transmembrane proteins"/>
    <property type="match status" value="1"/>
</dbReference>
<dbReference type="InterPro" id="IPR000276">
    <property type="entry name" value="GPCR_Rhodpsn"/>
</dbReference>
<dbReference type="InterPro" id="IPR017452">
    <property type="entry name" value="GPCR_Rhodpsn_7TM"/>
</dbReference>
<dbReference type="PANTHER" id="PTHR45695">
    <property type="entry name" value="LEUCOKININ RECEPTOR-RELATED"/>
    <property type="match status" value="1"/>
</dbReference>
<dbReference type="PANTHER" id="PTHR45695:SF15">
    <property type="entry name" value="OPSIN RH2"/>
    <property type="match status" value="1"/>
</dbReference>
<dbReference type="Pfam" id="PF00001">
    <property type="entry name" value="7tm_1"/>
    <property type="match status" value="1"/>
</dbReference>
<dbReference type="PRINTS" id="PR00237">
    <property type="entry name" value="GPCRRHODOPSN"/>
</dbReference>
<dbReference type="SMART" id="SM01381">
    <property type="entry name" value="7TM_GPCR_Srsx"/>
    <property type="match status" value="1"/>
</dbReference>
<dbReference type="SUPFAM" id="SSF81321">
    <property type="entry name" value="Family A G protein-coupled receptor-like"/>
    <property type="match status" value="1"/>
</dbReference>
<dbReference type="PROSITE" id="PS00237">
    <property type="entry name" value="G_PROTEIN_RECEP_F1_1"/>
    <property type="match status" value="1"/>
</dbReference>
<dbReference type="PROSITE" id="PS50262">
    <property type="entry name" value="G_PROTEIN_RECEP_F1_2"/>
    <property type="match status" value="1"/>
</dbReference>
<feature type="chain" id="PRO_0000070229" description="Neuropeptide receptor 15">
    <location>
        <begin position="1"/>
        <end position="345"/>
    </location>
</feature>
<feature type="topological domain" description="Extracellular" evidence="1">
    <location>
        <begin position="1"/>
        <end position="11"/>
    </location>
</feature>
<feature type="transmembrane region" description="Helical; Name=1" evidence="1">
    <location>
        <begin position="12"/>
        <end position="32"/>
    </location>
</feature>
<feature type="topological domain" description="Cytoplasmic" evidence="1">
    <location>
        <begin position="33"/>
        <end position="40"/>
    </location>
</feature>
<feature type="transmembrane region" description="Helical; Name=2" evidence="1">
    <location>
        <begin position="41"/>
        <end position="61"/>
    </location>
</feature>
<feature type="topological domain" description="Extracellular" evidence="1">
    <location>
        <begin position="62"/>
        <end position="90"/>
    </location>
</feature>
<feature type="transmembrane region" description="Helical; Name=3" evidence="1">
    <location>
        <begin position="91"/>
        <end position="111"/>
    </location>
</feature>
<feature type="topological domain" description="Cytoplasmic" evidence="1">
    <location>
        <begin position="112"/>
        <end position="125"/>
    </location>
</feature>
<feature type="transmembrane region" description="Helical; Name=4" evidence="1">
    <location>
        <begin position="126"/>
        <end position="146"/>
    </location>
</feature>
<feature type="topological domain" description="Extracellular" evidence="1">
    <location>
        <begin position="147"/>
        <end position="187"/>
    </location>
</feature>
<feature type="transmembrane region" description="Helical; Name=5" evidence="1">
    <location>
        <begin position="188"/>
        <end position="208"/>
    </location>
</feature>
<feature type="topological domain" description="Cytoplasmic" evidence="1">
    <location>
        <begin position="209"/>
        <end position="246"/>
    </location>
</feature>
<feature type="transmembrane region" description="Helical; Name=6" evidence="1">
    <location>
        <begin position="247"/>
        <end position="267"/>
    </location>
</feature>
<feature type="topological domain" description="Extracellular" evidence="1">
    <location>
        <begin position="268"/>
        <end position="281"/>
    </location>
</feature>
<feature type="transmembrane region" description="Helical; Name=7" evidence="1">
    <location>
        <begin position="282"/>
        <end position="304"/>
    </location>
</feature>
<feature type="topological domain" description="Cytoplasmic" evidence="1">
    <location>
        <begin position="305"/>
        <end position="345"/>
    </location>
</feature>
<feature type="disulfide bond" evidence="2">
    <location>
        <begin position="82"/>
        <end position="171"/>
    </location>
</feature>
<organism>
    <name type="scientific">Caenorhabditis elegans</name>
    <dbReference type="NCBI Taxonomy" id="6239"/>
    <lineage>
        <taxon>Eukaryota</taxon>
        <taxon>Metazoa</taxon>
        <taxon>Ecdysozoa</taxon>
        <taxon>Nematoda</taxon>
        <taxon>Chromadorea</taxon>
        <taxon>Rhabditida</taxon>
        <taxon>Rhabditina</taxon>
        <taxon>Rhabditomorpha</taxon>
        <taxon>Rhabditoidea</taxon>
        <taxon>Rhabditidae</taxon>
        <taxon>Peloderinae</taxon>
        <taxon>Caenorhabditis</taxon>
    </lineage>
</organism>
<gene>
    <name type="primary">npr-15</name>
    <name type="ORF">T27D1.3</name>
</gene>
<proteinExistence type="evidence at transcript level"/>
<comment type="function">
    <text evidence="3 4 5">Probable receptor for neuropeptide ligand nlp-8 that plays a role in octopamine signaling and specifically, the octopamine inhibition of aversion responses in olfactory sensory neurons. Plays a crucial role in daf-7 expression (PubMed:37060828). Acts in concert with gpa-4 to activate TGF-beta-like daf-7 secretion in the ASI neuron, thereby promoting larval development and inhibition of dauer diapause (PubMed:37060828). Suppresses immune response against pathogenic infection by inhibiting transcription regulators elt-2 and hlh-30 in ASJ neuron (PubMed:38446031). Promotes pathogen avoidance behavior via intestinal gon-2, independent of aerotaxis (PubMed:38446031).</text>
</comment>
<comment type="subcellular location">
    <subcellularLocation>
        <location evidence="6">Cell membrane</location>
        <topology evidence="6">Multi-pass membrane protein</topology>
    </subcellularLocation>
</comment>
<comment type="tissue specificity">
    <text evidence="3 4 5">Expressed in pharyngeal muscle and AWC, ASG, ASE, ASI, and ASJ sensory neurons (PubMed:22124329, PubMed:38446031). Expressed in ASI neuron (PubMed:37060828). Expressed in AFD neurons and in AVK interneuron (PubMed:38446031).</text>
</comment>
<comment type="developmental stage">
    <text evidence="5">Expressed in ASI neurons during L2 larval development.</text>
</comment>
<comment type="disruption phenotype">
    <text evidence="3 4 5">Increases the likelihood of dauer diapause in L2 larval stage animals (PubMed:37060828). Reduces the level of daf-7 secreted in the ASI neurons but has no effect on daf-28 secretion (PubMed:37060828). Does not rescue the absence of dauer diapause in daf-3 mutant background (PubMed:37060828). Exhibits broad pathogen resistance with longer lifespan when feeding on live pathogenic bacteria (PubMed:38446031). Shows both reduced avoidance and reduced learned avoidance of pathogenic bacteria (PubMed:38446031). Does not affect pharyngeal pumping rate and defecation cycle of young adults (PubMed:38446031). RNAi-mediated knockdown in AWC sensory neurons results in reduced octopamine inhibition of the aversive response to 100% 1-octanol.</text>
</comment>
<comment type="similarity">
    <text evidence="2">Belongs to the G-protein coupled receptor 1 family.</text>
</comment>
<accession>Q09638</accession>
<accession>O01344</accession>
<protein>
    <recommendedName>
        <fullName>Neuropeptide receptor 15</fullName>
    </recommendedName>
</protein>